<reference evidence="10" key="1">
    <citation type="journal article" date="2009" name="J. Biol. Chem.">
        <title>A novel mitochondrial sphingomyelinase in zebrafish cells.</title>
        <authorList>
            <person name="Yabu T."/>
            <person name="Shimuzu A."/>
            <person name="Yamashita M."/>
        </authorList>
    </citation>
    <scope>NUCLEOTIDE SEQUENCE [MRNA]</scope>
    <scope>FUNCTION</scope>
    <scope>CATALYTIC ACTIVITY</scope>
    <scope>COFACTOR</scope>
    <scope>ACTIVITY REGULATION</scope>
    <scope>BIOPHYSICOCHEMICAL PROPERTIES</scope>
    <scope>SUBCELLULAR LOCATION</scope>
    <scope>TOPOLOGY</scope>
    <scope>MUTAGENESIS OF HIS-529</scope>
    <scope>IDENTIFICATION BY MASS SPECTROMETRY</scope>
</reference>
<reference evidence="11" key="2">
    <citation type="journal article" date="2013" name="Nature">
        <title>The zebrafish reference genome sequence and its relationship to the human genome.</title>
        <authorList>
            <person name="Howe K."/>
            <person name="Clark M.D."/>
            <person name="Torroja C.F."/>
            <person name="Torrance J."/>
            <person name="Berthelot C."/>
            <person name="Muffato M."/>
            <person name="Collins J.E."/>
            <person name="Humphray S."/>
            <person name="McLaren K."/>
            <person name="Matthews L."/>
            <person name="McLaren S."/>
            <person name="Sealy I."/>
            <person name="Caccamo M."/>
            <person name="Churcher C."/>
            <person name="Scott C."/>
            <person name="Barrett J.C."/>
            <person name="Koch R."/>
            <person name="Rauch G.J."/>
            <person name="White S."/>
            <person name="Chow W."/>
            <person name="Kilian B."/>
            <person name="Quintais L.T."/>
            <person name="Guerra-Assuncao J.A."/>
            <person name="Zhou Y."/>
            <person name="Gu Y."/>
            <person name="Yen J."/>
            <person name="Vogel J.H."/>
            <person name="Eyre T."/>
            <person name="Redmond S."/>
            <person name="Banerjee R."/>
            <person name="Chi J."/>
            <person name="Fu B."/>
            <person name="Langley E."/>
            <person name="Maguire S.F."/>
            <person name="Laird G.K."/>
            <person name="Lloyd D."/>
            <person name="Kenyon E."/>
            <person name="Donaldson S."/>
            <person name="Sehra H."/>
            <person name="Almeida-King J."/>
            <person name="Loveland J."/>
            <person name="Trevanion S."/>
            <person name="Jones M."/>
            <person name="Quail M."/>
            <person name="Willey D."/>
            <person name="Hunt A."/>
            <person name="Burton J."/>
            <person name="Sims S."/>
            <person name="McLay K."/>
            <person name="Plumb B."/>
            <person name="Davis J."/>
            <person name="Clee C."/>
            <person name="Oliver K."/>
            <person name="Clark R."/>
            <person name="Riddle C."/>
            <person name="Elliot D."/>
            <person name="Threadgold G."/>
            <person name="Harden G."/>
            <person name="Ware D."/>
            <person name="Begum S."/>
            <person name="Mortimore B."/>
            <person name="Kerry G."/>
            <person name="Heath P."/>
            <person name="Phillimore B."/>
            <person name="Tracey A."/>
            <person name="Corby N."/>
            <person name="Dunn M."/>
            <person name="Johnson C."/>
            <person name="Wood J."/>
            <person name="Clark S."/>
            <person name="Pelan S."/>
            <person name="Griffiths G."/>
            <person name="Smith M."/>
            <person name="Glithero R."/>
            <person name="Howden P."/>
            <person name="Barker N."/>
            <person name="Lloyd C."/>
            <person name="Stevens C."/>
            <person name="Harley J."/>
            <person name="Holt K."/>
            <person name="Panagiotidis G."/>
            <person name="Lovell J."/>
            <person name="Beasley H."/>
            <person name="Henderson C."/>
            <person name="Gordon D."/>
            <person name="Auger K."/>
            <person name="Wright D."/>
            <person name="Collins J."/>
            <person name="Raisen C."/>
            <person name="Dyer L."/>
            <person name="Leung K."/>
            <person name="Robertson L."/>
            <person name="Ambridge K."/>
            <person name="Leongamornlert D."/>
            <person name="McGuire S."/>
            <person name="Gilderthorp R."/>
            <person name="Griffiths C."/>
            <person name="Manthravadi D."/>
            <person name="Nichol S."/>
            <person name="Barker G."/>
            <person name="Whitehead S."/>
            <person name="Kay M."/>
            <person name="Brown J."/>
            <person name="Murnane C."/>
            <person name="Gray E."/>
            <person name="Humphries M."/>
            <person name="Sycamore N."/>
            <person name="Barker D."/>
            <person name="Saunders D."/>
            <person name="Wallis J."/>
            <person name="Babbage A."/>
            <person name="Hammond S."/>
            <person name="Mashreghi-Mohammadi M."/>
            <person name="Barr L."/>
            <person name="Martin S."/>
            <person name="Wray P."/>
            <person name="Ellington A."/>
            <person name="Matthews N."/>
            <person name="Ellwood M."/>
            <person name="Woodmansey R."/>
            <person name="Clark G."/>
            <person name="Cooper J."/>
            <person name="Tromans A."/>
            <person name="Grafham D."/>
            <person name="Skuce C."/>
            <person name="Pandian R."/>
            <person name="Andrews R."/>
            <person name="Harrison E."/>
            <person name="Kimberley A."/>
            <person name="Garnett J."/>
            <person name="Fosker N."/>
            <person name="Hall R."/>
            <person name="Garner P."/>
            <person name="Kelly D."/>
            <person name="Bird C."/>
            <person name="Palmer S."/>
            <person name="Gehring I."/>
            <person name="Berger A."/>
            <person name="Dooley C.M."/>
            <person name="Ersan-Urun Z."/>
            <person name="Eser C."/>
            <person name="Geiger H."/>
            <person name="Geisler M."/>
            <person name="Karotki L."/>
            <person name="Kirn A."/>
            <person name="Konantz J."/>
            <person name="Konantz M."/>
            <person name="Oberlander M."/>
            <person name="Rudolph-Geiger S."/>
            <person name="Teucke M."/>
            <person name="Lanz C."/>
            <person name="Raddatz G."/>
            <person name="Osoegawa K."/>
            <person name="Zhu B."/>
            <person name="Rapp A."/>
            <person name="Widaa S."/>
            <person name="Langford C."/>
            <person name="Yang F."/>
            <person name="Schuster S.C."/>
            <person name="Carter N.P."/>
            <person name="Harrow J."/>
            <person name="Ning Z."/>
            <person name="Herrero J."/>
            <person name="Searle S.M."/>
            <person name="Enright A."/>
            <person name="Geisler R."/>
            <person name="Plasterk R.H."/>
            <person name="Lee C."/>
            <person name="Westerfield M."/>
            <person name="de Jong P.J."/>
            <person name="Zon L.I."/>
            <person name="Postlethwait J.H."/>
            <person name="Nusslein-Volhard C."/>
            <person name="Hubbard T.J."/>
            <person name="Roest Crollius H."/>
            <person name="Rogers J."/>
            <person name="Stemple D.L."/>
        </authorList>
    </citation>
    <scope>NUCLEOTIDE SEQUENCE [LARGE SCALE GENOMIC DNA]</scope>
    <source>
        <strain evidence="11">Tuebingen</strain>
    </source>
</reference>
<reference evidence="9" key="3">
    <citation type="submission" date="2008-04" db="EMBL/GenBank/DDBJ databases">
        <authorList>
            <consortium name="NIH - Zebrafish Gene Collection (ZGC) project"/>
        </authorList>
    </citation>
    <scope>NUCLEOTIDE SEQUENCE [LARGE SCALE MRNA]</scope>
    <source>
        <tissue evidence="9">Ovary</tissue>
    </source>
</reference>
<organism evidence="11">
    <name type="scientific">Danio rerio</name>
    <name type="common">Zebrafish</name>
    <name type="synonym">Brachydanio rerio</name>
    <dbReference type="NCBI Taxonomy" id="7955"/>
    <lineage>
        <taxon>Eukaryota</taxon>
        <taxon>Metazoa</taxon>
        <taxon>Chordata</taxon>
        <taxon>Craniata</taxon>
        <taxon>Vertebrata</taxon>
        <taxon>Euteleostomi</taxon>
        <taxon>Actinopterygii</taxon>
        <taxon>Neopterygii</taxon>
        <taxon>Teleostei</taxon>
        <taxon>Ostariophysi</taxon>
        <taxon>Cypriniformes</taxon>
        <taxon>Danionidae</taxon>
        <taxon>Danioninae</taxon>
        <taxon>Danio</taxon>
    </lineage>
</organism>
<proteinExistence type="evidence at protein level"/>
<protein>
    <recommendedName>
        <fullName evidence="6">Sphingomyelin phosphodiesterase 5</fullName>
        <ecNumber evidence="4">3.1.4.12</ecNumber>
    </recommendedName>
    <alternativeName>
        <fullName evidence="5">Mitochondrial neutral sphingomyelinase</fullName>
        <shortName evidence="5">mtnSMase</shortName>
    </alternativeName>
</protein>
<gene>
    <name evidence="12" type="primary">smpd5</name>
    <name evidence="12" type="synonym">smpdm</name>
    <name evidence="8" type="ORF">zgc:153995</name>
</gene>
<evidence type="ECO:0000250" key="1"/>
<evidence type="ECO:0000250" key="2">
    <source>
        <dbReference type="UniProtKB" id="D6MZJ6"/>
    </source>
</evidence>
<evidence type="ECO:0000255" key="3"/>
<evidence type="ECO:0000269" key="4">
    <source>
    </source>
</evidence>
<evidence type="ECO:0000303" key="5">
    <source>
    </source>
</evidence>
<evidence type="ECO:0000305" key="6"/>
<evidence type="ECO:0000305" key="7">
    <source>
    </source>
</evidence>
<evidence type="ECO:0000312" key="8">
    <source>
        <dbReference type="EMBL" id="AAI24789.1"/>
    </source>
</evidence>
<evidence type="ECO:0000312" key="9">
    <source>
        <dbReference type="EMBL" id="AAI55731.1"/>
    </source>
</evidence>
<evidence type="ECO:0000312" key="10">
    <source>
        <dbReference type="EMBL" id="BAG12869.1"/>
    </source>
</evidence>
<evidence type="ECO:0000312" key="11">
    <source>
        <dbReference type="Proteomes" id="UP000000437"/>
    </source>
</evidence>
<evidence type="ECO:0000312" key="12">
    <source>
        <dbReference type="ZFIN" id="ZDB-GENE-061110-22"/>
    </source>
</evidence>
<name>NSMA5_DANRE</name>
<dbReference type="EC" id="3.1.4.12" evidence="4"/>
<dbReference type="EMBL" id="AB361066">
    <property type="protein sequence ID" value="BAG12869.1"/>
    <property type="molecule type" value="mRNA"/>
</dbReference>
<dbReference type="EMBL" id="CR759845">
    <property type="status" value="NOT_ANNOTATED_CDS"/>
    <property type="molecule type" value="Genomic_DNA"/>
</dbReference>
<dbReference type="EMBL" id="BC124788">
    <property type="protein sequence ID" value="AAI24789.1"/>
    <property type="molecule type" value="mRNA"/>
</dbReference>
<dbReference type="EMBL" id="BC155730">
    <property type="protein sequence ID" value="AAI55731.1"/>
    <property type="molecule type" value="mRNA"/>
</dbReference>
<dbReference type="EMBL" id="BC165400">
    <property type="protein sequence ID" value="AAI65400.1"/>
    <property type="molecule type" value="mRNA"/>
</dbReference>
<dbReference type="RefSeq" id="NP_001071083.1">
    <property type="nucleotide sequence ID" value="NM_001077615.1"/>
</dbReference>
<dbReference type="RefSeq" id="XP_005158509.1">
    <property type="nucleotide sequence ID" value="XM_005158452.5"/>
</dbReference>
<dbReference type="RefSeq" id="XP_005158510.1">
    <property type="nucleotide sequence ID" value="XM_005158453.5"/>
</dbReference>
<dbReference type="SMR" id="F1QG30"/>
<dbReference type="STRING" id="7955.ENSDARP00000077993"/>
<dbReference type="PaxDb" id="7955-ENSDARP00000104571"/>
<dbReference type="Ensembl" id="ENSDART00000083558">
    <property type="protein sequence ID" value="ENSDARP00000077993"/>
    <property type="gene ID" value="ENSDARG00000059811"/>
</dbReference>
<dbReference type="Ensembl" id="ENSDART00000124691">
    <property type="protein sequence ID" value="ENSDARP00000104571"/>
    <property type="gene ID" value="ENSDARG00000059811"/>
</dbReference>
<dbReference type="GeneID" id="567592"/>
<dbReference type="KEGG" id="dre:567592"/>
<dbReference type="AGR" id="ZFIN:ZDB-GENE-061110-22"/>
<dbReference type="CTD" id="392275"/>
<dbReference type="ZFIN" id="ZDB-GENE-061110-22">
    <property type="gene designation" value="smpd5"/>
</dbReference>
<dbReference type="eggNOG" id="ENOG502QVS2">
    <property type="taxonomic scope" value="Eukaryota"/>
</dbReference>
<dbReference type="HOGENOM" id="CLU_028243_0_0_1"/>
<dbReference type="InParanoid" id="F1QG30"/>
<dbReference type="OMA" id="ANICIMP"/>
<dbReference type="OrthoDB" id="40902at2759"/>
<dbReference type="PhylomeDB" id="F1QG30"/>
<dbReference type="TreeFam" id="TF328678"/>
<dbReference type="UniPathway" id="UPA00222"/>
<dbReference type="PRO" id="PR:F1QG30"/>
<dbReference type="Proteomes" id="UP000000437">
    <property type="component" value="Alternate scaffold 16"/>
</dbReference>
<dbReference type="Proteomes" id="UP000000437">
    <property type="component" value="Chromosome 16"/>
</dbReference>
<dbReference type="Bgee" id="ENSDARG00000059811">
    <property type="expression patterns" value="Expressed in pharyngeal gill and 21 other cell types or tissues"/>
</dbReference>
<dbReference type="GO" id="GO:0005737">
    <property type="term" value="C:cytoplasm"/>
    <property type="evidence" value="ECO:0000318"/>
    <property type="project" value="GO_Central"/>
</dbReference>
<dbReference type="GO" id="GO:0005789">
    <property type="term" value="C:endoplasmic reticulum membrane"/>
    <property type="evidence" value="ECO:0000250"/>
    <property type="project" value="UniProtKB"/>
</dbReference>
<dbReference type="GO" id="GO:0005576">
    <property type="term" value="C:extracellular region"/>
    <property type="evidence" value="ECO:0007669"/>
    <property type="project" value="InterPro"/>
</dbReference>
<dbReference type="GO" id="GO:0005743">
    <property type="term" value="C:mitochondrial inner membrane"/>
    <property type="evidence" value="ECO:0007669"/>
    <property type="project" value="UniProtKB-SubCell"/>
</dbReference>
<dbReference type="GO" id="GO:0005758">
    <property type="term" value="C:mitochondrial intermembrane space"/>
    <property type="evidence" value="ECO:0000314"/>
    <property type="project" value="ZFIN"/>
</dbReference>
<dbReference type="GO" id="GO:0031966">
    <property type="term" value="C:mitochondrial membrane"/>
    <property type="evidence" value="ECO:0000250"/>
    <property type="project" value="UniProtKB"/>
</dbReference>
<dbReference type="GO" id="GO:0046872">
    <property type="term" value="F:metal ion binding"/>
    <property type="evidence" value="ECO:0007669"/>
    <property type="project" value="UniProtKB-KW"/>
</dbReference>
<dbReference type="GO" id="GO:0004620">
    <property type="term" value="F:phospholipase activity"/>
    <property type="evidence" value="ECO:0000318"/>
    <property type="project" value="GO_Central"/>
</dbReference>
<dbReference type="GO" id="GO:0004767">
    <property type="term" value="F:sphingomyelin phosphodiesterase activity"/>
    <property type="evidence" value="ECO:0000314"/>
    <property type="project" value="ZFIN"/>
</dbReference>
<dbReference type="GO" id="GO:0046513">
    <property type="term" value="P:ceramide biosynthetic process"/>
    <property type="evidence" value="ECO:0000250"/>
    <property type="project" value="UniProtKB"/>
</dbReference>
<dbReference type="GO" id="GO:0006687">
    <property type="term" value="P:glycosphingolipid metabolic process"/>
    <property type="evidence" value="ECO:0000314"/>
    <property type="project" value="ZFIN"/>
</dbReference>
<dbReference type="GO" id="GO:0006685">
    <property type="term" value="P:sphingomyelin catabolic process"/>
    <property type="evidence" value="ECO:0000250"/>
    <property type="project" value="UniProtKB"/>
</dbReference>
<dbReference type="GO" id="GO:0006684">
    <property type="term" value="P:sphingomyelin metabolic process"/>
    <property type="evidence" value="ECO:0000318"/>
    <property type="project" value="GO_Central"/>
</dbReference>
<dbReference type="CDD" id="cd09078">
    <property type="entry name" value="nSMase"/>
    <property type="match status" value="1"/>
</dbReference>
<dbReference type="FunFam" id="3.60.10.10:FF:000114">
    <property type="entry name" value="Sphingomyelin phosphodiesterase 5"/>
    <property type="match status" value="1"/>
</dbReference>
<dbReference type="Gene3D" id="3.60.10.10">
    <property type="entry name" value="Endonuclease/exonuclease/phosphatase"/>
    <property type="match status" value="1"/>
</dbReference>
<dbReference type="InterPro" id="IPR036691">
    <property type="entry name" value="Endo/exonu/phosph_ase_sf"/>
</dbReference>
<dbReference type="InterPro" id="IPR005135">
    <property type="entry name" value="Endo/exonuclease/phosphatase"/>
</dbReference>
<dbReference type="InterPro" id="IPR038772">
    <property type="entry name" value="Sph/SMPD2-like"/>
</dbReference>
<dbReference type="InterPro" id="IPR017766">
    <property type="entry name" value="Sphingomyelinase/PLipase_C"/>
</dbReference>
<dbReference type="PANTHER" id="PTHR16320:SF9">
    <property type="entry name" value="SPHINGOMYELIN PHOSPHODIESTERASE 5"/>
    <property type="match status" value="1"/>
</dbReference>
<dbReference type="PANTHER" id="PTHR16320">
    <property type="entry name" value="SPHINGOMYELINASE FAMILY MEMBER"/>
    <property type="match status" value="1"/>
</dbReference>
<dbReference type="Pfam" id="PF03372">
    <property type="entry name" value="Exo_endo_phos"/>
    <property type="match status" value="1"/>
</dbReference>
<dbReference type="SUPFAM" id="SSF56219">
    <property type="entry name" value="DNase I-like"/>
    <property type="match status" value="1"/>
</dbReference>
<comment type="function">
    <text evidence="4">Catalyzes the hydrolysis of membrane sphingomyelin to form phosphorylcholine and ceramide.</text>
</comment>
<comment type="catalytic activity">
    <reaction evidence="4">
        <text>a sphingomyelin + H2O = phosphocholine + an N-acylsphing-4-enine + H(+)</text>
        <dbReference type="Rhea" id="RHEA:19253"/>
        <dbReference type="ChEBI" id="CHEBI:15377"/>
        <dbReference type="ChEBI" id="CHEBI:15378"/>
        <dbReference type="ChEBI" id="CHEBI:17636"/>
        <dbReference type="ChEBI" id="CHEBI:52639"/>
        <dbReference type="ChEBI" id="CHEBI:295975"/>
        <dbReference type="EC" id="3.1.4.12"/>
    </reaction>
    <physiologicalReaction direction="left-to-right" evidence="7">
        <dbReference type="Rhea" id="RHEA:19254"/>
    </physiologicalReaction>
</comment>
<comment type="catalytic activity">
    <reaction evidence="2">
        <text>N-(hexadecanoyl)-sphing-4-enine-1-phosphocholine + H2O = N-hexadecanoylsphing-4-enine + phosphocholine + H(+)</text>
        <dbReference type="Rhea" id="RHEA:45644"/>
        <dbReference type="ChEBI" id="CHEBI:15377"/>
        <dbReference type="ChEBI" id="CHEBI:15378"/>
        <dbReference type="ChEBI" id="CHEBI:72959"/>
        <dbReference type="ChEBI" id="CHEBI:78646"/>
        <dbReference type="ChEBI" id="CHEBI:295975"/>
    </reaction>
    <physiologicalReaction direction="left-to-right" evidence="2">
        <dbReference type="Rhea" id="RHEA:45645"/>
    </physiologicalReaction>
</comment>
<comment type="cofactor">
    <cofactor evidence="4">
        <name>Mg(2+)</name>
        <dbReference type="ChEBI" id="CHEBI:18420"/>
    </cofactor>
</comment>
<comment type="cofactor">
    <cofactor evidence="2">
        <name>Mn(2+)</name>
        <dbReference type="ChEBI" id="CHEBI:29035"/>
    </cofactor>
</comment>
<comment type="activity regulation">
    <text evidence="4">Activated by the phospholipids cardiolipin, phosphatidylserine, and phosphatidylethanolamine. Strongest activation with cardiolipin.</text>
</comment>
<comment type="biophysicochemical properties">
    <phDependence>
        <text evidence="4">Optimum pH is 7.5.</text>
    </phDependence>
</comment>
<comment type="pathway">
    <text evidence="4">Lipid metabolism; sphingolipid metabolism.</text>
</comment>
<comment type="subcellular location">
    <subcellularLocation>
        <location evidence="4">Mitochondrion inner membrane</location>
        <topology evidence="7">Single-pass type II membrane protein</topology>
        <orientation evidence="4">Intermembrane side</orientation>
    </subcellularLocation>
    <subcellularLocation>
        <location evidence="2">Endoplasmic reticulum membrane</location>
        <topology evidence="3">Single-pass membrane protein</topology>
    </subcellularLocation>
</comment>
<comment type="similarity">
    <text evidence="6">Belongs to the neutral sphingomyelinase family.</text>
</comment>
<feature type="transit peptide" description="Mitochondrion" evidence="4">
    <location>
        <begin position="1"/>
        <end position="35"/>
    </location>
</feature>
<feature type="chain" id="PRO_0000436567" description="Sphingomyelin phosphodiesterase 5">
    <location>
        <begin position="36"/>
        <end position="545"/>
    </location>
</feature>
<feature type="topological domain" description="Mitochondrial matrix" evidence="6">
    <location>
        <begin position="36"/>
        <end position="64"/>
    </location>
</feature>
<feature type="transmembrane region" description="Helical; Signal-anchor for type II membrane protein" evidence="3">
    <location>
        <begin position="65"/>
        <end position="85"/>
    </location>
</feature>
<feature type="topological domain" description="Mitochondrial intermembrane" evidence="7">
    <location>
        <begin position="86"/>
        <end position="545"/>
    </location>
</feature>
<feature type="active site" description="Proton acceptor" evidence="7">
    <location>
        <position position="529"/>
    </location>
</feature>
<feature type="binding site" evidence="1">
    <location>
        <position position="258"/>
    </location>
    <ligand>
        <name>Mg(2+)</name>
        <dbReference type="ChEBI" id="CHEBI:18420"/>
    </ligand>
</feature>
<feature type="site" description="Important for substrate recognition" evidence="1">
    <location>
        <position position="404"/>
    </location>
</feature>
<feature type="mutagenesis site" description="Severely impairs sphingomyelinase activity. No effect on mitochondrial localization." evidence="4">
    <original>H</original>
    <variation>A</variation>
    <location>
        <position position="529"/>
    </location>
</feature>
<feature type="sequence conflict" description="In Ref. 3; AAI55731." evidence="6" ref="3">
    <original>F</original>
    <variation>S</variation>
    <location>
        <position position="77"/>
    </location>
</feature>
<feature type="sequence conflict" description="In Ref. 1; BAG12869." evidence="6" ref="1">
    <original>I</original>
    <variation>T</variation>
    <location>
        <position position="104"/>
    </location>
</feature>
<feature type="sequence conflict" description="In Ref. 3; AAI24789/AAI65400." evidence="6" ref="3">
    <original>V</original>
    <variation>L</variation>
    <location>
        <position position="128"/>
    </location>
</feature>
<feature type="sequence conflict" description="In Ref. 3; AAI24789/AAI55731/AAI65400." evidence="6" ref="3">
    <original>I</original>
    <variation>V</variation>
    <location>
        <position position="150"/>
    </location>
</feature>
<feature type="sequence conflict" description="In Ref. 1; BAG12869." evidence="6" ref="1">
    <original>H</original>
    <variation>R</variation>
    <location>
        <position position="163"/>
    </location>
</feature>
<feature type="sequence conflict" description="In Ref. 3; AAI55731." evidence="6" ref="3">
    <original>EV</original>
    <variation>DA</variation>
    <location>
        <begin position="206"/>
        <end position="207"/>
    </location>
</feature>
<feature type="sequence conflict" description="In Ref. 3; AAI24789/AAI65400." evidence="6" ref="3">
    <original>R</original>
    <variation>K</variation>
    <location>
        <position position="505"/>
    </location>
</feature>
<sequence length="545" mass="61344">MSLRESPFPNGFLEGLHAVGWGLIFPCFWFLDRLIAVCISTTLERMWRLEQECYLHPLKVVFGSILFFILFVISTPFALLGFILWAPLQAIRRPFSYHKQEQSIPMENRNARWEEMGKISFGFLTANVCLLPDGIARFNNLGHTQKRALIIGKSIVQGVTRPHIRIFVDSPSSCGTVTPSSSLIPQPNASSYGSVDASGELPDAIEVNEITPKPNCNQNSNHQKHPPRSLRTLLRDADIPMEVSALFPPSVDIVCLQEVFDKRAARKLTQALGPLYGHVLYDVGVYACHPAGSCSSFKFFNSGLFLASRFPIMEAEYRCFPNGRGEDALAAKGLLTVKVDIGLQKGEKRMVGFINCTHLHAPEGDGAIRFEQLNMLSKWTSEFQTLNRRDDELPLFDVLCGDFNFDNCSPDDRLEQSHSVFDEYTDPCRAAAGKEKPWVIGTLLEQPTLYDENMRTPDNLQRTLESEDLRKDFISPPVALDGVPLVYPEADQPWIGRRIDYLLYREKSGHRTEVEELTYVTQLAGLTDHIPVGFRLSVSLDSEQN</sequence>
<keyword id="KW-0256">Endoplasmic reticulum</keyword>
<keyword id="KW-0378">Hydrolase</keyword>
<keyword id="KW-0443">Lipid metabolism</keyword>
<keyword id="KW-0460">Magnesium</keyword>
<keyword id="KW-0472">Membrane</keyword>
<keyword id="KW-0479">Metal-binding</keyword>
<keyword id="KW-0496">Mitochondrion</keyword>
<keyword id="KW-0999">Mitochondrion inner membrane</keyword>
<keyword id="KW-1185">Reference proteome</keyword>
<keyword id="KW-0735">Signal-anchor</keyword>
<keyword id="KW-0746">Sphingolipid metabolism</keyword>
<keyword id="KW-0809">Transit peptide</keyword>
<keyword id="KW-0812">Transmembrane</keyword>
<keyword id="KW-1133">Transmembrane helix</keyword>
<accession>F1QG30</accession>
<accession>A0AUR7</accession>
<accession>A9JRN5</accession>
<accession>B1B5D8</accession>